<name>LPOA_ECOLI</name>
<comment type="function">
    <text evidence="3 4">Regulator of peptidoglycan synthesis that is essential for the function of penicillin-binding protein 1A (PBP1a). Stimulates transpeptidase activity of PBP1a in vitro.</text>
</comment>
<comment type="subunit">
    <text evidence="3 4">Interacts with PBP1a.</text>
</comment>
<comment type="interaction">
    <interactant intactId="EBI-557795">
        <id>P45464</id>
    </interactant>
    <interactant intactId="EBI-541977">
        <id>P16433</id>
        <label>hycG</label>
    </interactant>
    <organismsDiffer>false</organismsDiffer>
    <experiments>2</experiments>
</comment>
<comment type="interaction">
    <interactant intactId="EBI-557795">
        <id>P45464</id>
    </interactant>
    <interactant intactId="EBI-1126191">
        <id>P02918</id>
        <label>mrcA</label>
    </interactant>
    <organismsDiffer>false</organismsDiffer>
    <experiments>4</experiments>
</comment>
<comment type="subcellular location">
    <subcellularLocation>
        <location evidence="3 4">Cell outer membrane</location>
        <topology evidence="3 4">Lipid-anchor</topology>
        <orientation evidence="3 4">Periplasmic side</orientation>
    </subcellularLocation>
    <text>Localizes at the sidewall of elongating cells.</text>
</comment>
<comment type="disruption phenotype">
    <text evidence="4">Absence of both LpoA and LpoB leads to a decrease in peptide cross-linking and to cell lysis.</text>
</comment>
<comment type="similarity">
    <text evidence="5">Belongs to the LpoA family.</text>
</comment>
<sequence>MVPSTFSRLKAARCLPVVLAALIFAGCGTHTPDQSTAYMQGTAQADSAFYLQQMQQSSDDTRINWQLLAIRALVKEGKTGQAVELFNQLPQELNDAQRREKTLLAVEIKLAQKDFAGAQNLLAKITPADLEQNQQARYWQAKIDASQGRPSIDLLRALIAQEPLLGAKEKQQNIDATWQALSSMTQEQANTLVINADENILQGWLDLQRVWFDNRNDPDMMKAGIADWQKRYPNNPGAKMLPTQLVNVKAFKPASTNKIALLLPLNGQAAVFGRTIQQGFEAAKNIGTQPVAAQVAAAPAADVAEQPQPQTVDGVASPAQASVSDLTGEQPAAQPVPVSAPATSTAAVSAPANPSAELKIYDTSSQPLSQILSQVQQDGASIVVGPLLKNNVEELLKSNTPLNVLALNQPENIENRVNICYFALSPEDEARDAARHIRDQGKQAPLVLIPRSSLGDRVANAFAQEWQKLGGGTVLQQKFGSTSELRAGVNGGSGIALTGSPITLRATTDSGMTTNNPTLQTTPTDDQFTNNGGRVDAVYIVATPGEIAFIKPMIAMRNGSQSGATLYASSRSAQGTAGPDFRLEMEGLQYSEIPMLAGGNLPLMQQALSAVNNDYSLARMYAMGVDAWSLANHFSQMRQVQGFEINGNTGSLTANPDCVINRNLSWLQYQQGQVVPVS</sequence>
<organism>
    <name type="scientific">Escherichia coli (strain K12)</name>
    <dbReference type="NCBI Taxonomy" id="83333"/>
    <lineage>
        <taxon>Bacteria</taxon>
        <taxon>Pseudomonadati</taxon>
        <taxon>Pseudomonadota</taxon>
        <taxon>Gammaproteobacteria</taxon>
        <taxon>Enterobacterales</taxon>
        <taxon>Enterobacteriaceae</taxon>
        <taxon>Escherichia</taxon>
    </lineage>
</organism>
<evidence type="ECO:0000255" key="1"/>
<evidence type="ECO:0000256" key="2">
    <source>
        <dbReference type="SAM" id="MobiDB-lite"/>
    </source>
</evidence>
<evidence type="ECO:0000269" key="3">
    <source>
    </source>
</evidence>
<evidence type="ECO:0000269" key="4">
    <source>
    </source>
</evidence>
<evidence type="ECO:0000305" key="5"/>
<evidence type="ECO:0007829" key="6">
    <source>
        <dbReference type="PDB" id="2MHK"/>
    </source>
</evidence>
<evidence type="ECO:0007829" key="7">
    <source>
        <dbReference type="PDB" id="6DR3"/>
    </source>
</evidence>
<reference key="1">
    <citation type="journal article" date="1997" name="Science">
        <title>The complete genome sequence of Escherichia coli K-12.</title>
        <authorList>
            <person name="Blattner F.R."/>
            <person name="Plunkett G. III"/>
            <person name="Bloch C.A."/>
            <person name="Perna N.T."/>
            <person name="Burland V."/>
            <person name="Riley M."/>
            <person name="Collado-Vides J."/>
            <person name="Glasner J.D."/>
            <person name="Rode C.K."/>
            <person name="Mayhew G.F."/>
            <person name="Gregor J."/>
            <person name="Davis N.W."/>
            <person name="Kirkpatrick H.A."/>
            <person name="Goeden M.A."/>
            <person name="Rose D.J."/>
            <person name="Mau B."/>
            <person name="Shao Y."/>
        </authorList>
    </citation>
    <scope>NUCLEOTIDE SEQUENCE [LARGE SCALE GENOMIC DNA]</scope>
    <source>
        <strain>K12 / MG1655 / ATCC 47076</strain>
    </source>
</reference>
<reference key="2">
    <citation type="journal article" date="2006" name="Mol. Syst. Biol.">
        <title>Highly accurate genome sequences of Escherichia coli K-12 strains MG1655 and W3110.</title>
        <authorList>
            <person name="Hayashi K."/>
            <person name="Morooka N."/>
            <person name="Yamamoto Y."/>
            <person name="Fujita K."/>
            <person name="Isono K."/>
            <person name="Choi S."/>
            <person name="Ohtsubo E."/>
            <person name="Baba T."/>
            <person name="Wanner B.L."/>
            <person name="Mori H."/>
            <person name="Horiuchi T."/>
        </authorList>
    </citation>
    <scope>NUCLEOTIDE SEQUENCE [LARGE SCALE GENOMIC DNA]</scope>
    <source>
        <strain>K12 / W3110 / ATCC 27325 / DSM 5911</strain>
    </source>
</reference>
<reference key="3">
    <citation type="journal article" date="2010" name="Cell">
        <title>Regulation of peptidoglycan synthesis by outer-membrane proteins.</title>
        <authorList>
            <person name="Typas A."/>
            <person name="Banzhaf M."/>
            <person name="van den Berg van Saparoea B."/>
            <person name="Verheul J."/>
            <person name="Biboy J."/>
            <person name="Nichols R.J."/>
            <person name="Zietek M."/>
            <person name="Beilharz K."/>
            <person name="Kannenberg K."/>
            <person name="von Rechenberg M."/>
            <person name="Breukink E."/>
            <person name="den Blaauwen T."/>
            <person name="Gross C.A."/>
            <person name="Vollmer W."/>
        </authorList>
    </citation>
    <scope>FUNCTION</scope>
    <scope>INTERACTION WITH PBP1A</scope>
    <scope>SUBCELLULAR LOCATION</scope>
    <source>
        <strain>K12</strain>
    </source>
</reference>
<reference key="4">
    <citation type="journal article" date="2010" name="Cell">
        <title>Lipoprotein cofactors located in the outer membrane activate bacterial cell wall polymerases.</title>
        <authorList>
            <person name="Paradis-Bleau C."/>
            <person name="Markovski M."/>
            <person name="Uehara T."/>
            <person name="Lupoli T.J."/>
            <person name="Walker S."/>
            <person name="Kahne D.E."/>
            <person name="Bernhardt T.G."/>
        </authorList>
    </citation>
    <scope>FUNCTION</scope>
    <scope>INTERACTION WITH PBP1A</scope>
    <scope>SUBCELLULAR LOCATION</scope>
    <scope>DISRUPTION PHENOTYPE</scope>
    <source>
        <strain>K12 / MG1655 / ATCC 47076</strain>
    </source>
</reference>
<feature type="signal peptide" evidence="1">
    <location>
        <begin position="1"/>
        <end position="26"/>
    </location>
</feature>
<feature type="chain" id="PRO_0000169452" description="Penicillin-binding protein activator LpoA">
    <location>
        <begin position="27"/>
        <end position="678"/>
    </location>
</feature>
<feature type="region of interest" description="Disordered" evidence="2">
    <location>
        <begin position="302"/>
        <end position="339"/>
    </location>
</feature>
<feature type="region of interest" description="Disordered" evidence="2">
    <location>
        <begin position="507"/>
        <end position="526"/>
    </location>
</feature>
<feature type="compositionally biased region" description="Low complexity" evidence="2">
    <location>
        <begin position="330"/>
        <end position="339"/>
    </location>
</feature>
<feature type="compositionally biased region" description="Low complexity" evidence="2">
    <location>
        <begin position="513"/>
        <end position="526"/>
    </location>
</feature>
<feature type="lipid moiety-binding region" description="N-palmitoyl cysteine" evidence="1">
    <location>
        <position position="27"/>
    </location>
</feature>
<feature type="lipid moiety-binding region" description="S-diacylglycerol cysteine" evidence="1">
    <location>
        <position position="27"/>
    </location>
</feature>
<feature type="helix" evidence="7">
    <location>
        <begin position="36"/>
        <end position="39"/>
    </location>
</feature>
<feature type="helix" evidence="7">
    <location>
        <begin position="47"/>
        <end position="54"/>
    </location>
</feature>
<feature type="helix" evidence="7">
    <location>
        <begin position="59"/>
        <end position="76"/>
    </location>
</feature>
<feature type="helix" evidence="7">
    <location>
        <begin position="79"/>
        <end position="87"/>
    </location>
</feature>
<feature type="helix" evidence="7">
    <location>
        <begin position="95"/>
        <end position="111"/>
    </location>
</feature>
<feature type="helix" evidence="7">
    <location>
        <begin position="115"/>
        <end position="122"/>
    </location>
</feature>
<feature type="helix" evidence="7">
    <location>
        <begin position="127"/>
        <end position="129"/>
    </location>
</feature>
<feature type="helix" evidence="7">
    <location>
        <begin position="132"/>
        <end position="146"/>
    </location>
</feature>
<feature type="helix" evidence="7">
    <location>
        <begin position="152"/>
        <end position="161"/>
    </location>
</feature>
<feature type="helix" evidence="7">
    <location>
        <begin position="162"/>
        <end position="164"/>
    </location>
</feature>
<feature type="helix" evidence="7">
    <location>
        <begin position="167"/>
        <end position="182"/>
    </location>
</feature>
<feature type="helix" evidence="7">
    <location>
        <begin position="186"/>
        <end position="190"/>
    </location>
</feature>
<feature type="helix" evidence="7">
    <location>
        <begin position="199"/>
        <end position="214"/>
    </location>
</feature>
<feature type="helix" evidence="7">
    <location>
        <begin position="218"/>
        <end position="231"/>
    </location>
</feature>
<feature type="helix" evidence="7">
    <location>
        <begin position="236"/>
        <end position="239"/>
    </location>
</feature>
<feature type="helix" evidence="7">
    <location>
        <begin position="243"/>
        <end position="246"/>
    </location>
</feature>
<feature type="strand" evidence="6">
    <location>
        <begin position="250"/>
        <end position="252"/>
    </location>
</feature>
<proteinExistence type="evidence at protein level"/>
<dbReference type="EMBL" id="U18997">
    <property type="protein sequence ID" value="AAA57950.1"/>
    <property type="molecule type" value="Genomic_DNA"/>
</dbReference>
<dbReference type="EMBL" id="U00096">
    <property type="protein sequence ID" value="AAC76181.1"/>
    <property type="molecule type" value="Genomic_DNA"/>
</dbReference>
<dbReference type="EMBL" id="AP009048">
    <property type="protein sequence ID" value="BAE77193.1"/>
    <property type="molecule type" value="Genomic_DNA"/>
</dbReference>
<dbReference type="PIR" id="G65104">
    <property type="entry name" value="G65104"/>
</dbReference>
<dbReference type="RefSeq" id="NP_417616.1">
    <property type="nucleotide sequence ID" value="NC_000913.3"/>
</dbReference>
<dbReference type="RefSeq" id="WP_000249104.1">
    <property type="nucleotide sequence ID" value="NZ_LN832404.1"/>
</dbReference>
<dbReference type="PDB" id="2MHK">
    <property type="method" value="NMR"/>
    <property type="chains" value="A=28-256"/>
</dbReference>
<dbReference type="PDB" id="6DR3">
    <property type="method" value="X-ray"/>
    <property type="resolution" value="2.10 A"/>
    <property type="chains" value="A=31-252"/>
</dbReference>
<dbReference type="PDBsum" id="2MHK"/>
<dbReference type="PDBsum" id="6DR3"/>
<dbReference type="BMRB" id="P45464"/>
<dbReference type="SMR" id="P45464"/>
<dbReference type="BioGRID" id="4261989">
    <property type="interactions" value="58"/>
</dbReference>
<dbReference type="DIP" id="DIP-12897N"/>
<dbReference type="FunCoup" id="P45464">
    <property type="interactions" value="99"/>
</dbReference>
<dbReference type="IntAct" id="P45464">
    <property type="interactions" value="4"/>
</dbReference>
<dbReference type="STRING" id="511145.b3147"/>
<dbReference type="jPOST" id="P45464"/>
<dbReference type="PaxDb" id="511145-b3147"/>
<dbReference type="EnsemblBacteria" id="AAC76181">
    <property type="protein sequence ID" value="AAC76181"/>
    <property type="gene ID" value="b3147"/>
</dbReference>
<dbReference type="GeneID" id="947663"/>
<dbReference type="KEGG" id="ecj:JW3116"/>
<dbReference type="KEGG" id="eco:b3147"/>
<dbReference type="KEGG" id="ecoc:C3026_17145"/>
<dbReference type="PATRIC" id="fig|511145.12.peg.3242"/>
<dbReference type="EchoBASE" id="EB2631"/>
<dbReference type="eggNOG" id="COG3107">
    <property type="taxonomic scope" value="Bacteria"/>
</dbReference>
<dbReference type="HOGENOM" id="CLU_026091_1_1_6"/>
<dbReference type="InParanoid" id="P45464"/>
<dbReference type="OMA" id="MRLYAMG"/>
<dbReference type="OrthoDB" id="6708821at2"/>
<dbReference type="PhylomeDB" id="P45464"/>
<dbReference type="BioCyc" id="EcoCyc:G7642-MONOMER"/>
<dbReference type="BioCyc" id="MetaCyc:G7642-MONOMER"/>
<dbReference type="EvolutionaryTrace" id="P45464"/>
<dbReference type="PRO" id="PR:P45464"/>
<dbReference type="Proteomes" id="UP000000625">
    <property type="component" value="Chromosome"/>
</dbReference>
<dbReference type="GO" id="GO:0009279">
    <property type="term" value="C:cell outer membrane"/>
    <property type="evidence" value="ECO:0000314"/>
    <property type="project" value="EcoCyc"/>
</dbReference>
<dbReference type="GO" id="GO:0031241">
    <property type="term" value="C:periplasmic side of cell outer membrane"/>
    <property type="evidence" value="ECO:0000314"/>
    <property type="project" value="UniProtKB"/>
</dbReference>
<dbReference type="GO" id="GO:0042597">
    <property type="term" value="C:periplasmic space"/>
    <property type="evidence" value="ECO:0007669"/>
    <property type="project" value="InterPro"/>
</dbReference>
<dbReference type="GO" id="GO:0019899">
    <property type="term" value="F:enzyme binding"/>
    <property type="evidence" value="ECO:0000314"/>
    <property type="project" value="EcoCyc"/>
</dbReference>
<dbReference type="GO" id="GO:0030234">
    <property type="term" value="F:enzyme regulator activity"/>
    <property type="evidence" value="ECO:0000314"/>
    <property type="project" value="UniProtKB"/>
</dbReference>
<dbReference type="GO" id="GO:0004553">
    <property type="term" value="F:hydrolase activity, hydrolyzing O-glycosyl compounds"/>
    <property type="evidence" value="ECO:0007669"/>
    <property type="project" value="InterPro"/>
</dbReference>
<dbReference type="GO" id="GO:0009252">
    <property type="term" value="P:peptidoglycan biosynthetic process"/>
    <property type="evidence" value="ECO:0000314"/>
    <property type="project" value="UniProtKB"/>
</dbReference>
<dbReference type="GO" id="GO:0008360">
    <property type="term" value="P:regulation of cell shape"/>
    <property type="evidence" value="ECO:0007669"/>
    <property type="project" value="UniProtKB-KW"/>
</dbReference>
<dbReference type="CDD" id="cd06339">
    <property type="entry name" value="PBP1_YraM_LppC_lipoprotein-like"/>
    <property type="match status" value="1"/>
</dbReference>
<dbReference type="FunFam" id="1.25.40.10:FF:000199">
    <property type="entry name" value="Penicillin-binding protein activator LpoA"/>
    <property type="match status" value="1"/>
</dbReference>
<dbReference type="FunFam" id="1.25.40.650:FF:000001">
    <property type="entry name" value="Penicillin-binding protein activator LpoA"/>
    <property type="match status" value="1"/>
</dbReference>
<dbReference type="Gene3D" id="1.25.40.650">
    <property type="match status" value="1"/>
</dbReference>
<dbReference type="Gene3D" id="3.40.50.2300">
    <property type="match status" value="2"/>
</dbReference>
<dbReference type="Gene3D" id="1.25.40.10">
    <property type="entry name" value="Tetratricopeptide repeat domain"/>
    <property type="match status" value="1"/>
</dbReference>
<dbReference type="HAMAP" id="MF_01890">
    <property type="entry name" value="LpoA"/>
    <property type="match status" value="1"/>
</dbReference>
<dbReference type="InterPro" id="IPR007443">
    <property type="entry name" value="LpoA"/>
</dbReference>
<dbReference type="InterPro" id="IPR008939">
    <property type="entry name" value="Lytic_TGlycosylase_superhlx_U"/>
</dbReference>
<dbReference type="InterPro" id="IPR028082">
    <property type="entry name" value="Peripla_BP_I"/>
</dbReference>
<dbReference type="InterPro" id="IPR011990">
    <property type="entry name" value="TPR-like_helical_dom_sf"/>
</dbReference>
<dbReference type="PANTHER" id="PTHR38038">
    <property type="entry name" value="PENICILLIN-BINDING PROTEIN ACTIVATOR LPOA"/>
    <property type="match status" value="1"/>
</dbReference>
<dbReference type="PANTHER" id="PTHR38038:SF1">
    <property type="entry name" value="PENICILLIN-BINDING PROTEIN ACTIVATOR LPOA"/>
    <property type="match status" value="1"/>
</dbReference>
<dbReference type="Pfam" id="PF04348">
    <property type="entry name" value="LppC"/>
    <property type="match status" value="2"/>
</dbReference>
<dbReference type="SUPFAM" id="SSF48435">
    <property type="entry name" value="Bacterial muramidases"/>
    <property type="match status" value="1"/>
</dbReference>
<dbReference type="SUPFAM" id="SSF53822">
    <property type="entry name" value="Periplasmic binding protein-like I"/>
    <property type="match status" value="1"/>
</dbReference>
<accession>P45464</accession>
<accession>Q2M963</accession>
<gene>
    <name type="primary">lpoA</name>
    <name type="synonym">yraM</name>
    <name type="ordered locus">b3147</name>
    <name type="ordered locus">JW3116</name>
</gene>
<keyword id="KW-0002">3D-structure</keyword>
<keyword id="KW-0998">Cell outer membrane</keyword>
<keyword id="KW-0133">Cell shape</keyword>
<keyword id="KW-0449">Lipoprotein</keyword>
<keyword id="KW-0472">Membrane</keyword>
<keyword id="KW-0564">Palmitate</keyword>
<keyword id="KW-0573">Peptidoglycan synthesis</keyword>
<keyword id="KW-1185">Reference proteome</keyword>
<keyword id="KW-0732">Signal</keyword>
<protein>
    <recommendedName>
        <fullName>Penicillin-binding protein activator LpoA</fullName>
        <shortName>PBP activator LpoA</shortName>
    </recommendedName>
    <alternativeName>
        <fullName>Lipoprotein activator of PBP from the outer membrane A</fullName>
    </alternativeName>
</protein>